<protein>
    <recommendedName>
        <fullName evidence="1">2,3-bisphosphoglycerate-dependent phosphoglycerate mutase 2</fullName>
        <shortName evidence="1">BPG-dependent PGAM 2</shortName>
        <shortName evidence="1">PGAM 2</shortName>
        <shortName evidence="1">Phosphoglyceromutase 2</shortName>
        <shortName evidence="1">dPGM 2</shortName>
        <ecNumber evidence="1">5.4.2.11</ecNumber>
    </recommendedName>
</protein>
<sequence length="229" mass="26212">MKRKLAKLVLVRHGESVANRDNVYTGWNDVPLSKKGIAQAKNAGLKVEKIAEFAPTHIHTSVLSRAIMTANIIADVCSFLYLPITKTWRLNERHYGALRGINKDVSKKIFGTNQVLEWRRGFDSVPPLLTQPVQDRRYQKYDMRLMPQGESLHQTQERLMPYFWDHIAPELMAGHDQLVVAHGSSLRALIKKIEDISNEDIVKVEVPNAEPIVYTFDTDLHIVKKEILH</sequence>
<comment type="function">
    <text evidence="1">Catalyzes the interconversion of 2-phosphoglycerate and 3-phosphoglycerate.</text>
</comment>
<comment type="catalytic activity">
    <reaction evidence="1">
        <text>(2R)-2-phosphoglycerate = (2R)-3-phosphoglycerate</text>
        <dbReference type="Rhea" id="RHEA:15901"/>
        <dbReference type="ChEBI" id="CHEBI:58272"/>
        <dbReference type="ChEBI" id="CHEBI:58289"/>
        <dbReference type="EC" id="5.4.2.11"/>
    </reaction>
</comment>
<comment type="pathway">
    <text evidence="1">Carbohydrate degradation; glycolysis; pyruvate from D-glyceraldehyde 3-phosphate: step 3/5.</text>
</comment>
<comment type="similarity">
    <text evidence="1">Belongs to the phosphoglycerate mutase family. BPG-dependent PGAM subfamily.</text>
</comment>
<organism>
    <name type="scientific">Lactobacillus johnsonii (strain CNCM I-12250 / La1 / NCC 533)</name>
    <dbReference type="NCBI Taxonomy" id="257314"/>
    <lineage>
        <taxon>Bacteria</taxon>
        <taxon>Bacillati</taxon>
        <taxon>Bacillota</taxon>
        <taxon>Bacilli</taxon>
        <taxon>Lactobacillales</taxon>
        <taxon>Lactobacillaceae</taxon>
        <taxon>Lactobacillus</taxon>
    </lineage>
</organism>
<dbReference type="EC" id="5.4.2.11" evidence="1"/>
<dbReference type="EMBL" id="AE017198">
    <property type="protein sequence ID" value="AAS08370.1"/>
    <property type="molecule type" value="Genomic_DNA"/>
</dbReference>
<dbReference type="SMR" id="Q74L45"/>
<dbReference type="KEGG" id="ljo:LJ_0380"/>
<dbReference type="eggNOG" id="COG0588">
    <property type="taxonomic scope" value="Bacteria"/>
</dbReference>
<dbReference type="HOGENOM" id="CLU_033323_1_5_9"/>
<dbReference type="UniPathway" id="UPA00109">
    <property type="reaction ID" value="UER00186"/>
</dbReference>
<dbReference type="Proteomes" id="UP000000581">
    <property type="component" value="Chromosome"/>
</dbReference>
<dbReference type="GO" id="GO:0004619">
    <property type="term" value="F:phosphoglycerate mutase activity"/>
    <property type="evidence" value="ECO:0007669"/>
    <property type="project" value="UniProtKB-EC"/>
</dbReference>
<dbReference type="GO" id="GO:0006094">
    <property type="term" value="P:gluconeogenesis"/>
    <property type="evidence" value="ECO:0007669"/>
    <property type="project" value="UniProtKB-UniRule"/>
</dbReference>
<dbReference type="GO" id="GO:0006096">
    <property type="term" value="P:glycolytic process"/>
    <property type="evidence" value="ECO:0007669"/>
    <property type="project" value="UniProtKB-UniRule"/>
</dbReference>
<dbReference type="CDD" id="cd07067">
    <property type="entry name" value="HP_PGM_like"/>
    <property type="match status" value="1"/>
</dbReference>
<dbReference type="Gene3D" id="3.40.50.1240">
    <property type="entry name" value="Phosphoglycerate mutase-like"/>
    <property type="match status" value="1"/>
</dbReference>
<dbReference type="HAMAP" id="MF_01039">
    <property type="entry name" value="PGAM_GpmA"/>
    <property type="match status" value="1"/>
</dbReference>
<dbReference type="InterPro" id="IPR013078">
    <property type="entry name" value="His_Pase_superF_clade-1"/>
</dbReference>
<dbReference type="InterPro" id="IPR029033">
    <property type="entry name" value="His_PPase_superfam"/>
</dbReference>
<dbReference type="InterPro" id="IPR001345">
    <property type="entry name" value="PG/BPGM_mutase_AS"/>
</dbReference>
<dbReference type="InterPro" id="IPR005952">
    <property type="entry name" value="Phosphogly_mut1"/>
</dbReference>
<dbReference type="NCBIfam" id="TIGR01258">
    <property type="entry name" value="pgm_1"/>
    <property type="match status" value="1"/>
</dbReference>
<dbReference type="PANTHER" id="PTHR11931">
    <property type="entry name" value="PHOSPHOGLYCERATE MUTASE"/>
    <property type="match status" value="1"/>
</dbReference>
<dbReference type="Pfam" id="PF00300">
    <property type="entry name" value="His_Phos_1"/>
    <property type="match status" value="1"/>
</dbReference>
<dbReference type="PIRSF" id="PIRSF000709">
    <property type="entry name" value="6PFK_2-Ptase"/>
    <property type="match status" value="1"/>
</dbReference>
<dbReference type="SMART" id="SM00855">
    <property type="entry name" value="PGAM"/>
    <property type="match status" value="1"/>
</dbReference>
<dbReference type="SUPFAM" id="SSF53254">
    <property type="entry name" value="Phosphoglycerate mutase-like"/>
    <property type="match status" value="1"/>
</dbReference>
<dbReference type="PROSITE" id="PS00175">
    <property type="entry name" value="PG_MUTASE"/>
    <property type="match status" value="1"/>
</dbReference>
<gene>
    <name evidence="1" type="primary">gpmA2</name>
    <name type="ordered locus">LJ_0380</name>
</gene>
<proteinExistence type="inferred from homology"/>
<accession>Q74L45</accession>
<reference key="1">
    <citation type="journal article" date="2004" name="Proc. Natl. Acad. Sci. U.S.A.">
        <title>The genome sequence of the probiotic intestinal bacterium Lactobacillus johnsonii NCC 533.</title>
        <authorList>
            <person name="Pridmore R.D."/>
            <person name="Berger B."/>
            <person name="Desiere F."/>
            <person name="Vilanova D."/>
            <person name="Barretto C."/>
            <person name="Pittet A.-C."/>
            <person name="Zwahlen M.-C."/>
            <person name="Rouvet M."/>
            <person name="Altermann E."/>
            <person name="Barrangou R."/>
            <person name="Mollet B."/>
            <person name="Mercenier A."/>
            <person name="Klaenhammer T."/>
            <person name="Arigoni F."/>
            <person name="Schell M.A."/>
        </authorList>
    </citation>
    <scope>NUCLEOTIDE SEQUENCE [LARGE SCALE GENOMIC DNA]</scope>
    <source>
        <strain>CNCM I-1225 / La1 / NCC 533</strain>
    </source>
</reference>
<name>GPMA2_LACJO</name>
<feature type="chain" id="PRO_0000179884" description="2,3-bisphosphoglycerate-dependent phosphoglycerate mutase 2">
    <location>
        <begin position="1"/>
        <end position="229"/>
    </location>
</feature>
<feature type="active site" description="Tele-phosphohistidine intermediate" evidence="1">
    <location>
        <position position="13"/>
    </location>
</feature>
<feature type="active site" description="Proton donor/acceptor" evidence="1">
    <location>
        <position position="92"/>
    </location>
</feature>
<feature type="binding site" evidence="1">
    <location>
        <begin position="12"/>
        <end position="19"/>
    </location>
    <ligand>
        <name>substrate</name>
    </ligand>
</feature>
<feature type="binding site" evidence="1">
    <location>
        <begin position="25"/>
        <end position="26"/>
    </location>
    <ligand>
        <name>substrate</name>
    </ligand>
</feature>
<feature type="binding site" evidence="1">
    <location>
        <position position="65"/>
    </location>
    <ligand>
        <name>substrate</name>
    </ligand>
</feature>
<feature type="binding site" evidence="1">
    <location>
        <begin position="92"/>
        <end position="95"/>
    </location>
    <ligand>
        <name>substrate</name>
    </ligand>
</feature>
<feature type="binding site" evidence="1">
    <location>
        <position position="103"/>
    </location>
    <ligand>
        <name>substrate</name>
    </ligand>
</feature>
<feature type="binding site" evidence="1">
    <location>
        <begin position="119"/>
        <end position="120"/>
    </location>
    <ligand>
        <name>substrate</name>
    </ligand>
</feature>
<feature type="site" description="Transition state stabilizer" evidence="1">
    <location>
        <position position="182"/>
    </location>
</feature>
<keyword id="KW-0312">Gluconeogenesis</keyword>
<keyword id="KW-0324">Glycolysis</keyword>
<keyword id="KW-0413">Isomerase</keyword>
<evidence type="ECO:0000255" key="1">
    <source>
        <dbReference type="HAMAP-Rule" id="MF_01039"/>
    </source>
</evidence>